<dbReference type="EMBL" id="U37279">
    <property type="protein sequence ID" value="AAC48642.1"/>
    <property type="molecule type" value="Genomic_DNA"/>
</dbReference>
<dbReference type="GlyCosmos" id="Q95228">
    <property type="glycosylation" value="7 sites, No reported glycans"/>
</dbReference>
<dbReference type="GO" id="GO:0005615">
    <property type="term" value="C:extracellular space"/>
    <property type="evidence" value="ECO:0007669"/>
    <property type="project" value="TreeGrafter"/>
</dbReference>
<dbReference type="GO" id="GO:0007595">
    <property type="term" value="P:lactation"/>
    <property type="evidence" value="ECO:0007669"/>
    <property type="project" value="TreeGrafter"/>
</dbReference>
<dbReference type="GO" id="GO:0050821">
    <property type="term" value="P:protein stabilization"/>
    <property type="evidence" value="ECO:0007669"/>
    <property type="project" value="TreeGrafter"/>
</dbReference>
<dbReference type="InterPro" id="IPR000117">
    <property type="entry name" value="Casein_kappa"/>
</dbReference>
<dbReference type="PANTHER" id="PTHR11470">
    <property type="entry name" value="KAPPA CASEIN"/>
    <property type="match status" value="1"/>
</dbReference>
<dbReference type="PANTHER" id="PTHR11470:SF2">
    <property type="entry name" value="KAPPA-CASEIN"/>
    <property type="match status" value="1"/>
</dbReference>
<dbReference type="Pfam" id="PF00997">
    <property type="entry name" value="Casein_kappa"/>
    <property type="match status" value="1"/>
</dbReference>
<organism>
    <name type="scientific">Odocoileus virginianus virginianus</name>
    <name type="common">Virginia white-tailed deer</name>
    <dbReference type="NCBI Taxonomy" id="9875"/>
    <lineage>
        <taxon>Eukaryota</taxon>
        <taxon>Metazoa</taxon>
        <taxon>Chordata</taxon>
        <taxon>Craniata</taxon>
        <taxon>Vertebrata</taxon>
        <taxon>Euteleostomi</taxon>
        <taxon>Mammalia</taxon>
        <taxon>Eutheria</taxon>
        <taxon>Laurasiatheria</taxon>
        <taxon>Artiodactyla</taxon>
        <taxon>Ruminantia</taxon>
        <taxon>Pecora</taxon>
        <taxon>Cervidae</taxon>
        <taxon>Odocoileinae</taxon>
        <taxon>Odocoileus</taxon>
    </lineage>
</organism>
<accession>Q95228</accession>
<sequence length="122" mass="13206">VALINNQFLPYPYYAKPGAVRSPAQILQWQVLPNTVPAKSCQAQPTTLARHPHPRLSFMAIPPKKNQDKTDIPTINTIATVESTITPTTEAIVDTVATPEASSEVIESAPETKTDQVTSTVV</sequence>
<gene>
    <name type="primary">CSN3</name>
    <name type="synonym">CSN10</name>
    <name type="synonym">CSNK</name>
</gene>
<comment type="function">
    <text>Kappa-casein stabilizes micelle formation, preventing casein precipitation in milk.</text>
</comment>
<comment type="subcellular location">
    <subcellularLocation>
        <location>Secreted</location>
    </subcellularLocation>
</comment>
<comment type="tissue specificity">
    <text>Mammary gland specific. Secreted in milk.</text>
</comment>
<comment type="similarity">
    <text evidence="5">Belongs to the kappa-casein family.</text>
</comment>
<name>CASK_ODOVI</name>
<protein>
    <recommendedName>
        <fullName>Kappa-casein</fullName>
    </recommendedName>
</protein>
<keyword id="KW-0325">Glycoprotein</keyword>
<keyword id="KW-0494">Milk protein</keyword>
<keyword id="KW-0597">Phosphoprotein</keyword>
<keyword id="KW-0964">Secreted</keyword>
<reference key="1">
    <citation type="journal article" date="1996" name="Mol. Phylogenet. Evol.">
        <title>K-casein gene phylogeny of higher ruminants (Pecora, Artiodactyla).</title>
        <authorList>
            <person name="Cronin M.A."/>
            <person name="Stuart R."/>
            <person name="Pierson B.J."/>
            <person name="Patton J.C."/>
        </authorList>
    </citation>
    <scope>NUCLEOTIDE SEQUENCE [GENOMIC DNA]</scope>
</reference>
<feature type="chain" id="PRO_0000144116" description="Kappa-casein">
    <location>
        <begin position="1" status="less than"/>
        <end position="122"/>
    </location>
</feature>
<feature type="region of interest" description="Disordered" evidence="4">
    <location>
        <begin position="98"/>
        <end position="122"/>
    </location>
</feature>
<feature type="site" description="Cleavage; by chymosin/rennin" evidence="1">
    <location>
        <begin position="58"/>
        <end position="59"/>
    </location>
</feature>
<feature type="modified residue" description="Phosphothreonine" evidence="2">
    <location>
        <position position="98"/>
    </location>
</feature>
<feature type="modified residue" description="Phosphoserine; alternate" evidence="2">
    <location>
        <position position="102"/>
    </location>
</feature>
<feature type="modified residue" description="Phosphoserine" evidence="3">
    <location>
        <position position="119"/>
    </location>
</feature>
<feature type="glycosylation site" description="O-linked (GalNAc...) threonine" evidence="2">
    <location>
        <position position="74"/>
    </location>
</feature>
<feature type="glycosylation site" description="O-linked (GalNAc...) threonine" evidence="2">
    <location>
        <position position="84"/>
    </location>
</feature>
<feature type="glycosylation site" description="O-linked (GalNAc...) threonine" evidence="2">
    <location>
        <position position="86"/>
    </location>
</feature>
<feature type="glycosylation site" description="O-linked (GalNAc...) threonine" evidence="2">
    <location>
        <position position="89"/>
    </location>
</feature>
<feature type="glycosylation site" description="O-linked (GalNAc...) threonine" evidence="2">
    <location>
        <position position="95"/>
    </location>
</feature>
<feature type="glycosylation site" description="O-linked (GalNAc...) serine; alternate" evidence="2">
    <location>
        <position position="102"/>
    </location>
</feature>
<feature type="glycosylation site" description="O-linked (GalNAc...) threonine" evidence="2">
    <location>
        <position position="118"/>
    </location>
</feature>
<feature type="non-terminal residue">
    <location>
        <position position="1"/>
    </location>
</feature>
<evidence type="ECO:0000250" key="1"/>
<evidence type="ECO:0000250" key="2">
    <source>
        <dbReference type="UniProtKB" id="P02668"/>
    </source>
</evidence>
<evidence type="ECO:0000250" key="3">
    <source>
        <dbReference type="UniProtKB" id="P02670"/>
    </source>
</evidence>
<evidence type="ECO:0000256" key="4">
    <source>
        <dbReference type="SAM" id="MobiDB-lite"/>
    </source>
</evidence>
<evidence type="ECO:0000305" key="5"/>
<proteinExistence type="evidence at transcript level"/>